<organism evidence="10">
    <name type="scientific">Streptococcus pneumoniae serotype 2 (strain D39 / NCTC 7466)</name>
    <dbReference type="NCBI Taxonomy" id="373153"/>
    <lineage>
        <taxon>Bacteria</taxon>
        <taxon>Bacillati</taxon>
        <taxon>Bacillota</taxon>
        <taxon>Bacilli</taxon>
        <taxon>Lactobacillales</taxon>
        <taxon>Streptococcaceae</taxon>
        <taxon>Streptococcus</taxon>
    </lineage>
</organism>
<dbReference type="EMBL" id="CP000410">
    <property type="protein sequence ID" value="ABJ54050.1"/>
    <property type="molecule type" value="Genomic_DNA"/>
</dbReference>
<dbReference type="RefSeq" id="WP_000022268.1">
    <property type="nucleotide sequence ID" value="NZ_JAMLJR010000001.1"/>
</dbReference>
<dbReference type="SMR" id="A0A0H2ZM82"/>
<dbReference type="STRING" id="373153.SPD_0659"/>
<dbReference type="PaxDb" id="373153-SPD_0659"/>
<dbReference type="KEGG" id="spd:SPD_0659"/>
<dbReference type="eggNOG" id="COG2884">
    <property type="taxonomic scope" value="Bacteria"/>
</dbReference>
<dbReference type="HOGENOM" id="CLU_000604_1_22_9"/>
<dbReference type="BioCyc" id="SPNE373153:G1G6V-725-MONOMER"/>
<dbReference type="Proteomes" id="UP000001452">
    <property type="component" value="Chromosome"/>
</dbReference>
<dbReference type="GO" id="GO:0005886">
    <property type="term" value="C:plasma membrane"/>
    <property type="evidence" value="ECO:0007669"/>
    <property type="project" value="UniProtKB-SubCell"/>
</dbReference>
<dbReference type="GO" id="GO:0005524">
    <property type="term" value="F:ATP binding"/>
    <property type="evidence" value="ECO:0007669"/>
    <property type="project" value="UniProtKB-KW"/>
</dbReference>
<dbReference type="GO" id="GO:0016887">
    <property type="term" value="F:ATP hydrolysis activity"/>
    <property type="evidence" value="ECO:0007669"/>
    <property type="project" value="InterPro"/>
</dbReference>
<dbReference type="GO" id="GO:0022857">
    <property type="term" value="F:transmembrane transporter activity"/>
    <property type="evidence" value="ECO:0007669"/>
    <property type="project" value="TreeGrafter"/>
</dbReference>
<dbReference type="GO" id="GO:0051301">
    <property type="term" value="P:cell division"/>
    <property type="evidence" value="ECO:0007669"/>
    <property type="project" value="UniProtKB-KW"/>
</dbReference>
<dbReference type="FunFam" id="3.40.50.300:FF:000056">
    <property type="entry name" value="Cell division ATP-binding protein FtsE"/>
    <property type="match status" value="1"/>
</dbReference>
<dbReference type="Gene3D" id="3.40.50.300">
    <property type="entry name" value="P-loop containing nucleotide triphosphate hydrolases"/>
    <property type="match status" value="1"/>
</dbReference>
<dbReference type="InterPro" id="IPR003593">
    <property type="entry name" value="AAA+_ATPase"/>
</dbReference>
<dbReference type="InterPro" id="IPR003439">
    <property type="entry name" value="ABC_transporter-like_ATP-bd"/>
</dbReference>
<dbReference type="InterPro" id="IPR017871">
    <property type="entry name" value="ABC_transporter-like_CS"/>
</dbReference>
<dbReference type="InterPro" id="IPR015854">
    <property type="entry name" value="ABC_transpr_LolD-like"/>
</dbReference>
<dbReference type="InterPro" id="IPR005286">
    <property type="entry name" value="Cell_div_FtsE"/>
</dbReference>
<dbReference type="InterPro" id="IPR027417">
    <property type="entry name" value="P-loop_NTPase"/>
</dbReference>
<dbReference type="NCBIfam" id="TIGR02673">
    <property type="entry name" value="FtsE"/>
    <property type="match status" value="1"/>
</dbReference>
<dbReference type="PANTHER" id="PTHR24220:SF470">
    <property type="entry name" value="CELL DIVISION ATP-BINDING PROTEIN FTSE"/>
    <property type="match status" value="1"/>
</dbReference>
<dbReference type="PANTHER" id="PTHR24220">
    <property type="entry name" value="IMPORT ATP-BINDING PROTEIN"/>
    <property type="match status" value="1"/>
</dbReference>
<dbReference type="Pfam" id="PF00005">
    <property type="entry name" value="ABC_tran"/>
    <property type="match status" value="1"/>
</dbReference>
<dbReference type="SMART" id="SM00382">
    <property type="entry name" value="AAA"/>
    <property type="match status" value="1"/>
</dbReference>
<dbReference type="SUPFAM" id="SSF52540">
    <property type="entry name" value="P-loop containing nucleoside triphosphate hydrolases"/>
    <property type="match status" value="1"/>
</dbReference>
<dbReference type="PROSITE" id="PS00211">
    <property type="entry name" value="ABC_TRANSPORTER_1"/>
    <property type="match status" value="1"/>
</dbReference>
<dbReference type="PROSITE" id="PS50893">
    <property type="entry name" value="ABC_TRANSPORTER_2"/>
    <property type="match status" value="1"/>
</dbReference>
<comment type="function">
    <text evidence="2 4 5">Part of the ABC transporter FtsEX involved in cellular division (By similarity). Has ATPase activity (PubMed:27167971). Essential for cell division and viability (PubMed:23860769).</text>
</comment>
<comment type="catalytic activity">
    <reaction evidence="5">
        <text>ATP + H2O = ADP + phosphate + H(+)</text>
        <dbReference type="Rhea" id="RHEA:13065"/>
        <dbReference type="ChEBI" id="CHEBI:15377"/>
        <dbReference type="ChEBI" id="CHEBI:15378"/>
        <dbReference type="ChEBI" id="CHEBI:30616"/>
        <dbReference type="ChEBI" id="CHEBI:43474"/>
        <dbReference type="ChEBI" id="CHEBI:456216"/>
    </reaction>
</comment>
<comment type="subunit">
    <text evidence="2 3">Homodimer (By similarity). Interacts with FtsX; forms a membrane-associated complex (PubMed:22006325). Interacts with pcsB (PubMed:22006325).</text>
</comment>
<comment type="subcellular location">
    <subcellularLocation>
        <location evidence="2 3">Cell membrane</location>
        <topology evidence="2 3">Peripheral membrane protein</topology>
        <orientation evidence="2">Cytoplasmic side</orientation>
    </subcellularLocation>
</comment>
<comment type="disruption phenotype">
    <text evidence="3">Essential; cannot be deleted.</text>
</comment>
<comment type="similarity">
    <text evidence="2">Belongs to the ABC transporter superfamily.</text>
</comment>
<gene>
    <name evidence="6 10" type="primary">ftsE</name>
    <name evidence="9" type="ordered locus">SPD_0659</name>
</gene>
<feature type="chain" id="PRO_0000459705" description="Cell division ATP-binding protein FtsE">
    <location>
        <begin position="1"/>
        <end position="230"/>
    </location>
</feature>
<feature type="domain" description="ABC transporter" evidence="1">
    <location>
        <begin position="4"/>
        <end position="229"/>
    </location>
</feature>
<feature type="binding site" evidence="1">
    <location>
        <begin position="37"/>
        <end position="44"/>
    </location>
    <ligand>
        <name>ATP</name>
        <dbReference type="ChEBI" id="CHEBI:30616"/>
    </ligand>
</feature>
<feature type="mutagenesis site" description="Growth cessation and formation of spherical cells with aberrant division planes." evidence="4">
    <original>K</original>
    <variation>A</variation>
    <location>
        <position position="43"/>
    </location>
</feature>
<feature type="mutagenesis site" description="Growth cessation and formation of spherical cells with aberrant division planes." evidence="4">
    <original>D</original>
    <variation>A</variation>
    <location>
        <position position="164"/>
    </location>
</feature>
<feature type="mutagenesis site" description="Growth cessation and formation of spherical cells with aberrant division planes." evidence="4">
    <original>E</original>
    <variation>A</variation>
    <location>
        <position position="165"/>
    </location>
</feature>
<sequence length="230" mass="25797">MSIIEMRDVVKKYDNGTTALRGVSVSVQPGEFAYIVGPSGAGKSTFIRSLYREVKIDKGSLSVAGFNLVKIKKKDVPLLRRSVGVVFQDYKLLPKKTVYENIAYAMEVIGENRRNIKRRVMEVLDLVGLKHKVRSFPNELSGGEQQRIAIARAIVNNPKVLIADEPTGNLDPDNSWEIMNLLERINLQGTTILMATHNSQIVNTLRHRVIAIENGRVVRDESKGEYGYDD</sequence>
<protein>
    <recommendedName>
        <fullName evidence="8">Cell division ATP-binding protein FtsE</fullName>
    </recommendedName>
</protein>
<accession>A0A0H2ZM82</accession>
<reference evidence="10" key="1">
    <citation type="journal article" date="2007" name="J. Bacteriol.">
        <title>Genome sequence of Avery's virulent serotype 2 strain D39 of Streptococcus pneumoniae and comparison with that of unencapsulated laboratory strain R6.</title>
        <authorList>
            <person name="Lanie J.A."/>
            <person name="Ng W.-L."/>
            <person name="Kazmierczak K.M."/>
            <person name="Andrzejewski T.M."/>
            <person name="Davidsen T.M."/>
            <person name="Wayne K.J."/>
            <person name="Tettelin H."/>
            <person name="Glass J.I."/>
            <person name="Winkler M.E."/>
        </authorList>
    </citation>
    <scope>NUCLEOTIDE SEQUENCE [LARGE SCALE GENOMIC DNA]</scope>
    <source>
        <strain evidence="10">D39 / NCTC 7466</strain>
    </source>
</reference>
<reference evidence="7" key="2">
    <citation type="journal article" date="2011" name="Proc. Natl. Acad. Sci. U.S.A.">
        <title>Essential PcsB putative peptidoglycan hydrolase interacts with the essential FtsXSpn cell division protein in Streptococcus pneumoniae D39.</title>
        <authorList>
            <person name="Sham L.T."/>
            <person name="Barendt S.M."/>
            <person name="Kopecky K.E."/>
            <person name="Winkler M.E."/>
        </authorList>
    </citation>
    <scope>INTERACTION WITH FTSX AND PCSB</scope>
    <scope>SUBCELLULAR LOCATION</scope>
    <scope>IDENTIFICATION BY MASS SPECTROMETRY</scope>
    <scope>DISRUPTION PHENOTYPE</scope>
</reference>
<reference evidence="7" key="3">
    <citation type="journal article" date="2013" name="MBio">
        <title>Involvement of FtsE ATPase and FtsX extracellular loops 1 and 2 in FtsEX-PcsB complex function in cell division of Streptococcus pneumoniae D39.</title>
        <authorList>
            <person name="Sham L.T."/>
            <person name="Jensen K.R."/>
            <person name="Bruce K.E."/>
            <person name="Winkler M.E."/>
        </authorList>
    </citation>
    <scope>FUNCTION</scope>
    <scope>MUTAGENESIS OF LYS-43; ASP-164 AND GLU-165</scope>
</reference>
<reference evidence="7" key="4">
    <citation type="journal article" date="2016" name="MicrobiologyOpen">
        <title>Biochemical characterization of essential cell division proteins FtsX and FtsE that mediate peptidoglycan hydrolysis by PcsB in Streptococcus pneumoniae.</title>
        <authorList>
            <person name="Bajaj R."/>
            <person name="Bruce K.E."/>
            <person name="Davidson A.L."/>
            <person name="Rued B.E."/>
            <person name="Stauffacher C.V."/>
            <person name="Winkler M.E."/>
        </authorList>
    </citation>
    <scope>FUNCTION</scope>
    <scope>CATALYTIC ACTIVITY</scope>
</reference>
<keyword id="KW-0067">ATP-binding</keyword>
<keyword id="KW-0131">Cell cycle</keyword>
<keyword id="KW-0132">Cell division</keyword>
<keyword id="KW-1003">Cell membrane</keyword>
<keyword id="KW-0472">Membrane</keyword>
<keyword id="KW-0547">Nucleotide-binding</keyword>
<keyword id="KW-1185">Reference proteome</keyword>
<keyword id="KW-0813">Transport</keyword>
<proteinExistence type="evidence at protein level"/>
<name>FTSE_STRP2</name>
<evidence type="ECO:0000255" key="1">
    <source>
        <dbReference type="PROSITE-ProRule" id="PRU00434"/>
    </source>
</evidence>
<evidence type="ECO:0000255" key="2">
    <source>
        <dbReference type="RuleBase" id="RU365094"/>
    </source>
</evidence>
<evidence type="ECO:0000269" key="3">
    <source>
    </source>
</evidence>
<evidence type="ECO:0000269" key="4">
    <source>
    </source>
</evidence>
<evidence type="ECO:0000269" key="5">
    <source>
    </source>
</evidence>
<evidence type="ECO:0000303" key="6">
    <source>
    </source>
</evidence>
<evidence type="ECO:0000305" key="7"/>
<evidence type="ECO:0000305" key="8">
    <source>
    </source>
</evidence>
<evidence type="ECO:0000312" key="9">
    <source>
        <dbReference type="EMBL" id="ABJ54050.1"/>
    </source>
</evidence>
<evidence type="ECO:0000312" key="10">
    <source>
        <dbReference type="Proteomes" id="UP000001452"/>
    </source>
</evidence>